<accession>Q2GG92</accession>
<comment type="function">
    <text evidence="1">Catalyzes the attachment of proline to tRNA(Pro) in a two-step reaction: proline is first activated by ATP to form Pro-AMP and then transferred to the acceptor end of tRNA(Pro).</text>
</comment>
<comment type="catalytic activity">
    <reaction evidence="1">
        <text>tRNA(Pro) + L-proline + ATP = L-prolyl-tRNA(Pro) + AMP + diphosphate</text>
        <dbReference type="Rhea" id="RHEA:14305"/>
        <dbReference type="Rhea" id="RHEA-COMP:9700"/>
        <dbReference type="Rhea" id="RHEA-COMP:9702"/>
        <dbReference type="ChEBI" id="CHEBI:30616"/>
        <dbReference type="ChEBI" id="CHEBI:33019"/>
        <dbReference type="ChEBI" id="CHEBI:60039"/>
        <dbReference type="ChEBI" id="CHEBI:78442"/>
        <dbReference type="ChEBI" id="CHEBI:78532"/>
        <dbReference type="ChEBI" id="CHEBI:456215"/>
        <dbReference type="EC" id="6.1.1.15"/>
    </reaction>
</comment>
<comment type="subunit">
    <text evidence="1">Homodimer.</text>
</comment>
<comment type="subcellular location">
    <subcellularLocation>
        <location evidence="1">Cytoplasm</location>
    </subcellularLocation>
</comment>
<comment type="similarity">
    <text evidence="1">Belongs to the class-II aminoacyl-tRNA synthetase family. ProS type 2 subfamily.</text>
</comment>
<proteinExistence type="inferred from homology"/>
<keyword id="KW-0030">Aminoacyl-tRNA synthetase</keyword>
<keyword id="KW-0067">ATP-binding</keyword>
<keyword id="KW-0963">Cytoplasm</keyword>
<keyword id="KW-0436">Ligase</keyword>
<keyword id="KW-0547">Nucleotide-binding</keyword>
<keyword id="KW-0648">Protein biosynthesis</keyword>
<keyword id="KW-1185">Reference proteome</keyword>
<protein>
    <recommendedName>
        <fullName evidence="1">Proline--tRNA ligase</fullName>
        <ecNumber evidence="1">6.1.1.15</ecNumber>
    </recommendedName>
    <alternativeName>
        <fullName evidence="1">Prolyl-tRNA synthetase</fullName>
        <shortName evidence="1">ProRS</shortName>
    </alternativeName>
</protein>
<feature type="chain" id="PRO_0000248898" description="Proline--tRNA ligase">
    <location>
        <begin position="1"/>
        <end position="424"/>
    </location>
</feature>
<name>SYP_EHRCR</name>
<sequence>MRLSDYYVPTLKETSADISVISHKYSIRAGLIKQIASGIYTWLPLGLKVLKNIENIVREEMNKSGSLEILMPLIQPASLWKESGRYDDYGSEMLRITDRNQREMLFGPTHEEVITDILRTTPVSHKDLPLILYQIQWKFRDELRPRYGIMRCREFLMKDAYSFDKDFSGAISSYNLMFKTYIKIFQKLGLTPIAVKADSGPIGGNLSHEFHVLANSGESTLYYDQDIIELMNSESIDVEKIKNTYTAADDMHDPQACPISSDKVKISKGIEIGHIFHLGDKYSKPMNANFCDSNNNKLLQMGCYGIGVSRLVAAIIEVFHDNKGIIWPETVAPFKFSLVNLYTSNDKCKKVAENLHMQLYDDVLYDDTDDSPGIKLARTDLLGMPWQVIIGKSTVEQDLIEVRNRLTKDKVLISTEQFLNKLKK</sequence>
<reference key="1">
    <citation type="journal article" date="2006" name="PLoS Genet.">
        <title>Comparative genomics of emerging human ehrlichiosis agents.</title>
        <authorList>
            <person name="Dunning Hotopp J.C."/>
            <person name="Lin M."/>
            <person name="Madupu R."/>
            <person name="Crabtree J."/>
            <person name="Angiuoli S.V."/>
            <person name="Eisen J.A."/>
            <person name="Seshadri R."/>
            <person name="Ren Q."/>
            <person name="Wu M."/>
            <person name="Utterback T.R."/>
            <person name="Smith S."/>
            <person name="Lewis M."/>
            <person name="Khouri H."/>
            <person name="Zhang C."/>
            <person name="Niu H."/>
            <person name="Lin Q."/>
            <person name="Ohashi N."/>
            <person name="Zhi N."/>
            <person name="Nelson W.C."/>
            <person name="Brinkac L.M."/>
            <person name="Dodson R.J."/>
            <person name="Rosovitz M.J."/>
            <person name="Sundaram J.P."/>
            <person name="Daugherty S.C."/>
            <person name="Davidsen T."/>
            <person name="Durkin A.S."/>
            <person name="Gwinn M.L."/>
            <person name="Haft D.H."/>
            <person name="Selengut J.D."/>
            <person name="Sullivan S.A."/>
            <person name="Zafar N."/>
            <person name="Zhou L."/>
            <person name="Benahmed F."/>
            <person name="Forberger H."/>
            <person name="Halpin R."/>
            <person name="Mulligan S."/>
            <person name="Robinson J."/>
            <person name="White O."/>
            <person name="Rikihisa Y."/>
            <person name="Tettelin H."/>
        </authorList>
    </citation>
    <scope>NUCLEOTIDE SEQUENCE [LARGE SCALE GENOMIC DNA]</scope>
    <source>
        <strain>ATCC CRL-10679 / Arkansas</strain>
    </source>
</reference>
<organism>
    <name type="scientific">Ehrlichia chaffeensis (strain ATCC CRL-10679 / Arkansas)</name>
    <dbReference type="NCBI Taxonomy" id="205920"/>
    <lineage>
        <taxon>Bacteria</taxon>
        <taxon>Pseudomonadati</taxon>
        <taxon>Pseudomonadota</taxon>
        <taxon>Alphaproteobacteria</taxon>
        <taxon>Rickettsiales</taxon>
        <taxon>Anaplasmataceae</taxon>
        <taxon>Ehrlichia</taxon>
    </lineage>
</organism>
<gene>
    <name evidence="1" type="primary">proS</name>
    <name type="ordered locus">ECH_0740</name>
</gene>
<dbReference type="EC" id="6.1.1.15" evidence="1"/>
<dbReference type="EMBL" id="CP000236">
    <property type="protein sequence ID" value="ABD44598.1"/>
    <property type="molecule type" value="Genomic_DNA"/>
</dbReference>
<dbReference type="RefSeq" id="WP_011452785.1">
    <property type="nucleotide sequence ID" value="NC_007799.1"/>
</dbReference>
<dbReference type="SMR" id="Q2GG92"/>
<dbReference type="STRING" id="205920.ECH_0740"/>
<dbReference type="KEGG" id="ech:ECH_0740"/>
<dbReference type="eggNOG" id="COG0442">
    <property type="taxonomic scope" value="Bacteria"/>
</dbReference>
<dbReference type="HOGENOM" id="CLU_016739_4_2_5"/>
<dbReference type="OrthoDB" id="9809052at2"/>
<dbReference type="Proteomes" id="UP000008320">
    <property type="component" value="Chromosome"/>
</dbReference>
<dbReference type="GO" id="GO:0005829">
    <property type="term" value="C:cytosol"/>
    <property type="evidence" value="ECO:0007669"/>
    <property type="project" value="TreeGrafter"/>
</dbReference>
<dbReference type="GO" id="GO:0005524">
    <property type="term" value="F:ATP binding"/>
    <property type="evidence" value="ECO:0007669"/>
    <property type="project" value="UniProtKB-UniRule"/>
</dbReference>
<dbReference type="GO" id="GO:0004827">
    <property type="term" value="F:proline-tRNA ligase activity"/>
    <property type="evidence" value="ECO:0007669"/>
    <property type="project" value="UniProtKB-UniRule"/>
</dbReference>
<dbReference type="GO" id="GO:0006433">
    <property type="term" value="P:prolyl-tRNA aminoacylation"/>
    <property type="evidence" value="ECO:0007669"/>
    <property type="project" value="UniProtKB-UniRule"/>
</dbReference>
<dbReference type="CDD" id="cd00779">
    <property type="entry name" value="ProRS_core_prok"/>
    <property type="match status" value="1"/>
</dbReference>
<dbReference type="FunFam" id="3.30.930.10:FF:000042">
    <property type="entry name" value="probable proline--tRNA ligase, mitochondrial"/>
    <property type="match status" value="1"/>
</dbReference>
<dbReference type="Gene3D" id="3.40.50.800">
    <property type="entry name" value="Anticodon-binding domain"/>
    <property type="match status" value="1"/>
</dbReference>
<dbReference type="Gene3D" id="3.30.930.10">
    <property type="entry name" value="Bira Bifunctional Protein, Domain 2"/>
    <property type="match status" value="1"/>
</dbReference>
<dbReference type="HAMAP" id="MF_01570">
    <property type="entry name" value="Pro_tRNA_synth_type2"/>
    <property type="match status" value="1"/>
</dbReference>
<dbReference type="InterPro" id="IPR002314">
    <property type="entry name" value="aa-tRNA-synt_IIb"/>
</dbReference>
<dbReference type="InterPro" id="IPR006195">
    <property type="entry name" value="aa-tRNA-synth_II"/>
</dbReference>
<dbReference type="InterPro" id="IPR045864">
    <property type="entry name" value="aa-tRNA-synth_II/BPL/LPL"/>
</dbReference>
<dbReference type="InterPro" id="IPR004154">
    <property type="entry name" value="Anticodon-bd"/>
</dbReference>
<dbReference type="InterPro" id="IPR036621">
    <property type="entry name" value="Anticodon-bd_dom_sf"/>
</dbReference>
<dbReference type="InterPro" id="IPR002316">
    <property type="entry name" value="Pro-tRNA-ligase_IIa"/>
</dbReference>
<dbReference type="InterPro" id="IPR004500">
    <property type="entry name" value="Pro-tRNA-synth_IIa_bac-type"/>
</dbReference>
<dbReference type="InterPro" id="IPR050062">
    <property type="entry name" value="Pro-tRNA_synthetase"/>
</dbReference>
<dbReference type="InterPro" id="IPR023716">
    <property type="entry name" value="Prolyl-tRNA_ligase_IIa_type2"/>
</dbReference>
<dbReference type="InterPro" id="IPR033730">
    <property type="entry name" value="ProRS_core_prok"/>
</dbReference>
<dbReference type="NCBIfam" id="NF008979">
    <property type="entry name" value="PRK12325.1"/>
    <property type="match status" value="1"/>
</dbReference>
<dbReference type="NCBIfam" id="TIGR00409">
    <property type="entry name" value="proS_fam_II"/>
    <property type="match status" value="1"/>
</dbReference>
<dbReference type="PANTHER" id="PTHR42753">
    <property type="entry name" value="MITOCHONDRIAL RIBOSOME PROTEIN L39/PROLYL-TRNA LIGASE FAMILY MEMBER"/>
    <property type="match status" value="1"/>
</dbReference>
<dbReference type="PANTHER" id="PTHR42753:SF2">
    <property type="entry name" value="PROLINE--TRNA LIGASE"/>
    <property type="match status" value="1"/>
</dbReference>
<dbReference type="Pfam" id="PF03129">
    <property type="entry name" value="HGTP_anticodon"/>
    <property type="match status" value="1"/>
</dbReference>
<dbReference type="Pfam" id="PF00587">
    <property type="entry name" value="tRNA-synt_2b"/>
    <property type="match status" value="1"/>
</dbReference>
<dbReference type="PRINTS" id="PR01046">
    <property type="entry name" value="TRNASYNTHPRO"/>
</dbReference>
<dbReference type="SUPFAM" id="SSF52954">
    <property type="entry name" value="Class II aaRS ABD-related"/>
    <property type="match status" value="1"/>
</dbReference>
<dbReference type="SUPFAM" id="SSF55681">
    <property type="entry name" value="Class II aaRS and biotin synthetases"/>
    <property type="match status" value="1"/>
</dbReference>
<dbReference type="PROSITE" id="PS50862">
    <property type="entry name" value="AA_TRNA_LIGASE_II"/>
    <property type="match status" value="1"/>
</dbReference>
<evidence type="ECO:0000255" key="1">
    <source>
        <dbReference type="HAMAP-Rule" id="MF_01570"/>
    </source>
</evidence>